<name>RS13_NEIG1</name>
<proteinExistence type="inferred from homology"/>
<sequence>MARIAGVNIPNNAHIVIGLQAIYGIGATRAKLICEAANIAPDTKAKDLDETQLDALRDQVAKYEVEGDLRREVTMSIKRLMDMGCYRGFRHRRGLPCRGQRTRTNARTRKGPRKAIAGKK</sequence>
<organism>
    <name type="scientific">Neisseria gonorrhoeae (strain ATCC 700825 / FA 1090)</name>
    <dbReference type="NCBI Taxonomy" id="242231"/>
    <lineage>
        <taxon>Bacteria</taxon>
        <taxon>Pseudomonadati</taxon>
        <taxon>Pseudomonadota</taxon>
        <taxon>Betaproteobacteria</taxon>
        <taxon>Neisseriales</taxon>
        <taxon>Neisseriaceae</taxon>
        <taxon>Neisseria</taxon>
    </lineage>
</organism>
<dbReference type="EMBL" id="AE004969">
    <property type="protein sequence ID" value="AAW90438.1"/>
    <property type="molecule type" value="Genomic_DNA"/>
</dbReference>
<dbReference type="RefSeq" id="WP_002215453.1">
    <property type="nucleotide sequence ID" value="NC_002946.2"/>
</dbReference>
<dbReference type="RefSeq" id="YP_208850.1">
    <property type="nucleotide sequence ID" value="NC_002946.2"/>
</dbReference>
<dbReference type="SMR" id="Q5F5U9"/>
<dbReference type="STRING" id="242231.NGO_1821"/>
<dbReference type="GeneID" id="93387240"/>
<dbReference type="KEGG" id="ngo:NGO_1821"/>
<dbReference type="PATRIC" id="fig|242231.10.peg.2186"/>
<dbReference type="HOGENOM" id="CLU_103849_1_2_4"/>
<dbReference type="Proteomes" id="UP000000535">
    <property type="component" value="Chromosome"/>
</dbReference>
<dbReference type="GO" id="GO:0005829">
    <property type="term" value="C:cytosol"/>
    <property type="evidence" value="ECO:0007669"/>
    <property type="project" value="TreeGrafter"/>
</dbReference>
<dbReference type="GO" id="GO:0015935">
    <property type="term" value="C:small ribosomal subunit"/>
    <property type="evidence" value="ECO:0007669"/>
    <property type="project" value="TreeGrafter"/>
</dbReference>
<dbReference type="GO" id="GO:0019843">
    <property type="term" value="F:rRNA binding"/>
    <property type="evidence" value="ECO:0007669"/>
    <property type="project" value="UniProtKB-UniRule"/>
</dbReference>
<dbReference type="GO" id="GO:0003735">
    <property type="term" value="F:structural constituent of ribosome"/>
    <property type="evidence" value="ECO:0007669"/>
    <property type="project" value="InterPro"/>
</dbReference>
<dbReference type="GO" id="GO:0000049">
    <property type="term" value="F:tRNA binding"/>
    <property type="evidence" value="ECO:0007669"/>
    <property type="project" value="UniProtKB-UniRule"/>
</dbReference>
<dbReference type="GO" id="GO:0006412">
    <property type="term" value="P:translation"/>
    <property type="evidence" value="ECO:0007669"/>
    <property type="project" value="UniProtKB-UniRule"/>
</dbReference>
<dbReference type="FunFam" id="1.10.8.50:FF:000001">
    <property type="entry name" value="30S ribosomal protein S13"/>
    <property type="match status" value="1"/>
</dbReference>
<dbReference type="FunFam" id="4.10.910.10:FF:000001">
    <property type="entry name" value="30S ribosomal protein S13"/>
    <property type="match status" value="1"/>
</dbReference>
<dbReference type="Gene3D" id="1.10.8.50">
    <property type="match status" value="1"/>
</dbReference>
<dbReference type="Gene3D" id="4.10.910.10">
    <property type="entry name" value="30s ribosomal protein s13, domain 2"/>
    <property type="match status" value="1"/>
</dbReference>
<dbReference type="HAMAP" id="MF_01315">
    <property type="entry name" value="Ribosomal_uS13"/>
    <property type="match status" value="1"/>
</dbReference>
<dbReference type="InterPro" id="IPR027437">
    <property type="entry name" value="Rbsml_uS13_C"/>
</dbReference>
<dbReference type="InterPro" id="IPR001892">
    <property type="entry name" value="Ribosomal_uS13"/>
</dbReference>
<dbReference type="InterPro" id="IPR010979">
    <property type="entry name" value="Ribosomal_uS13-like_H2TH"/>
</dbReference>
<dbReference type="InterPro" id="IPR019980">
    <property type="entry name" value="Ribosomal_uS13_bac-type"/>
</dbReference>
<dbReference type="InterPro" id="IPR018269">
    <property type="entry name" value="Ribosomal_uS13_CS"/>
</dbReference>
<dbReference type="NCBIfam" id="TIGR03631">
    <property type="entry name" value="uS13_bact"/>
    <property type="match status" value="1"/>
</dbReference>
<dbReference type="PANTHER" id="PTHR10871">
    <property type="entry name" value="30S RIBOSOMAL PROTEIN S13/40S RIBOSOMAL PROTEIN S18"/>
    <property type="match status" value="1"/>
</dbReference>
<dbReference type="PANTHER" id="PTHR10871:SF1">
    <property type="entry name" value="SMALL RIBOSOMAL SUBUNIT PROTEIN US13M"/>
    <property type="match status" value="1"/>
</dbReference>
<dbReference type="Pfam" id="PF00416">
    <property type="entry name" value="Ribosomal_S13"/>
    <property type="match status" value="1"/>
</dbReference>
<dbReference type="PIRSF" id="PIRSF002134">
    <property type="entry name" value="Ribosomal_S13"/>
    <property type="match status" value="1"/>
</dbReference>
<dbReference type="SUPFAM" id="SSF46946">
    <property type="entry name" value="S13-like H2TH domain"/>
    <property type="match status" value="1"/>
</dbReference>
<dbReference type="PROSITE" id="PS00646">
    <property type="entry name" value="RIBOSOMAL_S13_1"/>
    <property type="match status" value="1"/>
</dbReference>
<dbReference type="PROSITE" id="PS50159">
    <property type="entry name" value="RIBOSOMAL_S13_2"/>
    <property type="match status" value="1"/>
</dbReference>
<feature type="chain" id="PRO_0000230531" description="Small ribosomal subunit protein uS13">
    <location>
        <begin position="1"/>
        <end position="120"/>
    </location>
</feature>
<feature type="region of interest" description="Disordered" evidence="2">
    <location>
        <begin position="96"/>
        <end position="120"/>
    </location>
</feature>
<evidence type="ECO:0000255" key="1">
    <source>
        <dbReference type="HAMAP-Rule" id="MF_01315"/>
    </source>
</evidence>
<evidence type="ECO:0000256" key="2">
    <source>
        <dbReference type="SAM" id="MobiDB-lite"/>
    </source>
</evidence>
<evidence type="ECO:0000305" key="3"/>
<gene>
    <name evidence="1" type="primary">rpsM</name>
    <name type="ordered locus">NGO_1821</name>
</gene>
<reference key="1">
    <citation type="submission" date="2003-03" db="EMBL/GenBank/DDBJ databases">
        <title>The complete genome sequence of Neisseria gonorrhoeae.</title>
        <authorList>
            <person name="Lewis L.A."/>
            <person name="Gillaspy A.F."/>
            <person name="McLaughlin R.E."/>
            <person name="Gipson M."/>
            <person name="Ducey T.F."/>
            <person name="Ownbey T."/>
            <person name="Hartman K."/>
            <person name="Nydick C."/>
            <person name="Carson M.B."/>
            <person name="Vaughn J."/>
            <person name="Thomson C."/>
            <person name="Song L."/>
            <person name="Lin S."/>
            <person name="Yuan X."/>
            <person name="Najar F."/>
            <person name="Zhan M."/>
            <person name="Ren Q."/>
            <person name="Zhu H."/>
            <person name="Qi S."/>
            <person name="Kenton S.M."/>
            <person name="Lai H."/>
            <person name="White J.D."/>
            <person name="Clifton S."/>
            <person name="Roe B.A."/>
            <person name="Dyer D.W."/>
        </authorList>
    </citation>
    <scope>NUCLEOTIDE SEQUENCE [LARGE SCALE GENOMIC DNA]</scope>
    <source>
        <strain>ATCC 700825 / FA 1090</strain>
    </source>
</reference>
<comment type="function">
    <text evidence="1">Located at the top of the head of the 30S subunit, it contacts several helices of the 16S rRNA. In the 70S ribosome it contacts the 23S rRNA (bridge B1a) and protein L5 of the 50S subunit (bridge B1b), connecting the 2 subunits; these bridges are implicated in subunit movement. Contacts the tRNAs in the A and P-sites.</text>
</comment>
<comment type="subunit">
    <text evidence="1">Part of the 30S ribosomal subunit. Forms a loose heterodimer with protein S19. Forms two bridges to the 50S subunit in the 70S ribosome.</text>
</comment>
<comment type="similarity">
    <text evidence="1">Belongs to the universal ribosomal protein uS13 family.</text>
</comment>
<keyword id="KW-1185">Reference proteome</keyword>
<keyword id="KW-0687">Ribonucleoprotein</keyword>
<keyword id="KW-0689">Ribosomal protein</keyword>
<keyword id="KW-0694">RNA-binding</keyword>
<keyword id="KW-0699">rRNA-binding</keyword>
<keyword id="KW-0820">tRNA-binding</keyword>
<accession>Q5F5U9</accession>
<protein>
    <recommendedName>
        <fullName evidence="1">Small ribosomal subunit protein uS13</fullName>
    </recommendedName>
    <alternativeName>
        <fullName evidence="3">30S ribosomal protein S13</fullName>
    </alternativeName>
</protein>